<organism>
    <name type="scientific">Dictyostelium discoideum</name>
    <name type="common">Social amoeba</name>
    <dbReference type="NCBI Taxonomy" id="44689"/>
    <lineage>
        <taxon>Eukaryota</taxon>
        <taxon>Amoebozoa</taxon>
        <taxon>Evosea</taxon>
        <taxon>Eumycetozoa</taxon>
        <taxon>Dictyostelia</taxon>
        <taxon>Dictyosteliales</taxon>
        <taxon>Dictyosteliaceae</taxon>
        <taxon>Dictyostelium</taxon>
    </lineage>
</organism>
<protein>
    <recommendedName>
        <fullName>Mitochondrial substrate carrier family protein N</fullName>
    </recommendedName>
    <alternativeName>
        <fullName>Solute carrier family 25 member 3 homolog</fullName>
    </alternativeName>
</protein>
<evidence type="ECO:0000250" key="1"/>
<evidence type="ECO:0000255" key="2"/>
<evidence type="ECO:0000305" key="3"/>
<dbReference type="EMBL" id="AAFI02000218">
    <property type="protein sequence ID" value="EAL60635.2"/>
    <property type="molecule type" value="Genomic_DNA"/>
</dbReference>
<dbReference type="RefSeq" id="XP_629073.2">
    <property type="nucleotide sequence ID" value="XM_629071.2"/>
</dbReference>
<dbReference type="SMR" id="Q54BF6"/>
<dbReference type="FunCoup" id="Q54BF6">
    <property type="interactions" value="800"/>
</dbReference>
<dbReference type="IntAct" id="Q54BF6">
    <property type="interactions" value="1"/>
</dbReference>
<dbReference type="STRING" id="44689.Q54BF6"/>
<dbReference type="GlyGen" id="Q54BF6">
    <property type="glycosylation" value="1 site"/>
</dbReference>
<dbReference type="PaxDb" id="44689-DDB0233888"/>
<dbReference type="EnsemblProtists" id="EAL60635">
    <property type="protein sequence ID" value="EAL60635"/>
    <property type="gene ID" value="DDB_G0293646"/>
</dbReference>
<dbReference type="GeneID" id="8629365"/>
<dbReference type="KEGG" id="ddi:DDB_G0293646"/>
<dbReference type="dictyBase" id="DDB_G0293646">
    <property type="gene designation" value="mcfN"/>
</dbReference>
<dbReference type="VEuPathDB" id="AmoebaDB:DDB_G0293646"/>
<dbReference type="eggNOG" id="KOG0767">
    <property type="taxonomic scope" value="Eukaryota"/>
</dbReference>
<dbReference type="HOGENOM" id="CLU_039456_1_0_1"/>
<dbReference type="InParanoid" id="Q54BF6"/>
<dbReference type="OMA" id="KMYIEEG"/>
<dbReference type="PhylomeDB" id="Q54BF6"/>
<dbReference type="PRO" id="PR:Q54BF6"/>
<dbReference type="Proteomes" id="UP000002195">
    <property type="component" value="Chromosome 6"/>
</dbReference>
<dbReference type="GO" id="GO:0005743">
    <property type="term" value="C:mitochondrial inner membrane"/>
    <property type="evidence" value="ECO:0000318"/>
    <property type="project" value="GO_Central"/>
</dbReference>
<dbReference type="GO" id="GO:0005739">
    <property type="term" value="C:mitochondrion"/>
    <property type="evidence" value="ECO:0000250"/>
    <property type="project" value="dictyBase"/>
</dbReference>
<dbReference type="GO" id="GO:0005315">
    <property type="term" value="F:phosphate transmembrane transporter activity"/>
    <property type="evidence" value="ECO:0000250"/>
    <property type="project" value="dictyBase"/>
</dbReference>
<dbReference type="GO" id="GO:1990547">
    <property type="term" value="P:mitochondrial phosphate ion transmembrane transport"/>
    <property type="evidence" value="ECO:0007669"/>
    <property type="project" value="InterPro"/>
</dbReference>
<dbReference type="GO" id="GO:0035435">
    <property type="term" value="P:phosphate ion transmembrane transport"/>
    <property type="evidence" value="ECO:0000318"/>
    <property type="project" value="GO_Central"/>
</dbReference>
<dbReference type="GO" id="GO:0006817">
    <property type="term" value="P:phosphate ion transport"/>
    <property type="evidence" value="ECO:0000250"/>
    <property type="project" value="dictyBase"/>
</dbReference>
<dbReference type="FunFam" id="1.50.40.10:FF:000024">
    <property type="entry name" value="MIR1p Mitochondrial phosphate carrier"/>
    <property type="match status" value="1"/>
</dbReference>
<dbReference type="Gene3D" id="1.50.40.10">
    <property type="entry name" value="Mitochondrial carrier domain"/>
    <property type="match status" value="1"/>
</dbReference>
<dbReference type="InterPro" id="IPR002067">
    <property type="entry name" value="Mit_carrier"/>
</dbReference>
<dbReference type="InterPro" id="IPR018108">
    <property type="entry name" value="Mitochondrial_sb/sol_carrier"/>
</dbReference>
<dbReference type="InterPro" id="IPR023395">
    <property type="entry name" value="Mt_carrier_dom_sf"/>
</dbReference>
<dbReference type="InterPro" id="IPR044677">
    <property type="entry name" value="SLC25A3/Pic2/Mir1-like"/>
</dbReference>
<dbReference type="PANTHER" id="PTHR45671:SF12">
    <property type="entry name" value="MITOCHONDRIAL PHOSPHATE CARRIER PROTEIN"/>
    <property type="match status" value="1"/>
</dbReference>
<dbReference type="PANTHER" id="PTHR45671">
    <property type="entry name" value="SOLUTE CARRIER FAMILY 25 (MITOCHONDRIAL CARRIER PHOSPHATE CARRIER), MEMBER 3, LIKE-RELATED-RELATED"/>
    <property type="match status" value="1"/>
</dbReference>
<dbReference type="Pfam" id="PF00153">
    <property type="entry name" value="Mito_carr"/>
    <property type="match status" value="3"/>
</dbReference>
<dbReference type="PRINTS" id="PR00926">
    <property type="entry name" value="MITOCARRIER"/>
</dbReference>
<dbReference type="SUPFAM" id="SSF103506">
    <property type="entry name" value="Mitochondrial carrier"/>
    <property type="match status" value="1"/>
</dbReference>
<dbReference type="PROSITE" id="PS50920">
    <property type="entry name" value="SOLCAR"/>
    <property type="match status" value="3"/>
</dbReference>
<feature type="chain" id="PRO_0000385534" description="Mitochondrial substrate carrier family protein N">
    <location>
        <begin position="1"/>
        <end position="298"/>
    </location>
</feature>
<feature type="topological domain" description="Mitochondrial intermembrane" evidence="1">
    <location>
        <begin position="1"/>
        <end position="13"/>
    </location>
</feature>
<feature type="transmembrane region" description="Helical; Name=1" evidence="2">
    <location>
        <begin position="14"/>
        <end position="34"/>
    </location>
</feature>
<feature type="topological domain" description="Mitochondrial matrix" evidence="1">
    <location>
        <begin position="35"/>
        <end position="60"/>
    </location>
</feature>
<feature type="transmembrane region" description="Helical; Name=2" evidence="2">
    <location>
        <begin position="61"/>
        <end position="81"/>
    </location>
</feature>
<feature type="topological domain" description="Mitochondrial intermembrane" evidence="1">
    <location>
        <begin position="82"/>
        <end position="105"/>
    </location>
</feature>
<feature type="transmembrane region" description="Helical; Name=3" evidence="2">
    <location>
        <begin position="106"/>
        <end position="126"/>
    </location>
</feature>
<feature type="topological domain" description="Mitochondrial matrix" evidence="1">
    <location>
        <begin position="127"/>
        <end position="162"/>
    </location>
</feature>
<feature type="transmembrane region" description="Helical; Name=4" evidence="2">
    <location>
        <begin position="163"/>
        <end position="179"/>
    </location>
</feature>
<feature type="topological domain" description="Mitochondrial intermembrane" evidence="1">
    <location>
        <begin position="180"/>
        <end position="208"/>
    </location>
</feature>
<feature type="transmembrane region" description="Helical; Name=5" evidence="2">
    <location>
        <begin position="209"/>
        <end position="229"/>
    </location>
</feature>
<feature type="topological domain" description="Mitochondrial matrix" evidence="1">
    <location>
        <begin position="230"/>
        <end position="262"/>
    </location>
</feature>
<feature type="transmembrane region" description="Helical; Name=6" evidence="2">
    <location>
        <begin position="263"/>
        <end position="283"/>
    </location>
</feature>
<feature type="topological domain" description="Mitochondrial intermembrane" evidence="1">
    <location>
        <begin position="284"/>
        <end position="298"/>
    </location>
</feature>
<feature type="repeat" description="Solcar 1">
    <location>
        <begin position="8"/>
        <end position="92"/>
    </location>
</feature>
<feature type="repeat" description="Solcar 2">
    <location>
        <begin position="104"/>
        <end position="188"/>
    </location>
</feature>
<feature type="repeat" description="Solcar 3">
    <location>
        <begin position="207"/>
        <end position="290"/>
    </location>
</feature>
<comment type="function">
    <text evidence="1">Mitochondrial solute carriers shuttle metabolites, nucleotides, and cofactors through the mitochondrial inner membrane. Transports phosphate groups from the cytosol to the mitochondrial matrix. Phosphate is cotransported with H(+) (By similarity).</text>
</comment>
<comment type="subcellular location">
    <subcellularLocation>
        <location>Mitochondrion inner membrane</location>
        <topology>Multi-pass membrane protein</topology>
    </subcellularLocation>
</comment>
<comment type="similarity">
    <text evidence="3">Belongs to the mitochondrial carrier (TC 2.A.29) family.</text>
</comment>
<reference key="1">
    <citation type="journal article" date="2005" name="Nature">
        <title>The genome of the social amoeba Dictyostelium discoideum.</title>
        <authorList>
            <person name="Eichinger L."/>
            <person name="Pachebat J.A."/>
            <person name="Gloeckner G."/>
            <person name="Rajandream M.A."/>
            <person name="Sucgang R."/>
            <person name="Berriman M."/>
            <person name="Song J."/>
            <person name="Olsen R."/>
            <person name="Szafranski K."/>
            <person name="Xu Q."/>
            <person name="Tunggal B."/>
            <person name="Kummerfeld S."/>
            <person name="Madera M."/>
            <person name="Konfortov B.A."/>
            <person name="Rivero F."/>
            <person name="Bankier A.T."/>
            <person name="Lehmann R."/>
            <person name="Hamlin N."/>
            <person name="Davies R."/>
            <person name="Gaudet P."/>
            <person name="Fey P."/>
            <person name="Pilcher K."/>
            <person name="Chen G."/>
            <person name="Saunders D."/>
            <person name="Sodergren E.J."/>
            <person name="Davis P."/>
            <person name="Kerhornou A."/>
            <person name="Nie X."/>
            <person name="Hall N."/>
            <person name="Anjard C."/>
            <person name="Hemphill L."/>
            <person name="Bason N."/>
            <person name="Farbrother P."/>
            <person name="Desany B."/>
            <person name="Just E."/>
            <person name="Morio T."/>
            <person name="Rost R."/>
            <person name="Churcher C.M."/>
            <person name="Cooper J."/>
            <person name="Haydock S."/>
            <person name="van Driessche N."/>
            <person name="Cronin A."/>
            <person name="Goodhead I."/>
            <person name="Muzny D.M."/>
            <person name="Mourier T."/>
            <person name="Pain A."/>
            <person name="Lu M."/>
            <person name="Harper D."/>
            <person name="Lindsay R."/>
            <person name="Hauser H."/>
            <person name="James K.D."/>
            <person name="Quiles M."/>
            <person name="Madan Babu M."/>
            <person name="Saito T."/>
            <person name="Buchrieser C."/>
            <person name="Wardroper A."/>
            <person name="Felder M."/>
            <person name="Thangavelu M."/>
            <person name="Johnson D."/>
            <person name="Knights A."/>
            <person name="Loulseged H."/>
            <person name="Mungall K.L."/>
            <person name="Oliver K."/>
            <person name="Price C."/>
            <person name="Quail M.A."/>
            <person name="Urushihara H."/>
            <person name="Hernandez J."/>
            <person name="Rabbinowitsch E."/>
            <person name="Steffen D."/>
            <person name="Sanders M."/>
            <person name="Ma J."/>
            <person name="Kohara Y."/>
            <person name="Sharp S."/>
            <person name="Simmonds M.N."/>
            <person name="Spiegler S."/>
            <person name="Tivey A."/>
            <person name="Sugano S."/>
            <person name="White B."/>
            <person name="Walker D."/>
            <person name="Woodward J.R."/>
            <person name="Winckler T."/>
            <person name="Tanaka Y."/>
            <person name="Shaulsky G."/>
            <person name="Schleicher M."/>
            <person name="Weinstock G.M."/>
            <person name="Rosenthal A."/>
            <person name="Cox E.C."/>
            <person name="Chisholm R.L."/>
            <person name="Gibbs R.A."/>
            <person name="Loomis W.F."/>
            <person name="Platzer M."/>
            <person name="Kay R.R."/>
            <person name="Williams J.G."/>
            <person name="Dear P.H."/>
            <person name="Noegel A.A."/>
            <person name="Barrell B.G."/>
            <person name="Kuspa A."/>
        </authorList>
    </citation>
    <scope>NUCLEOTIDE SEQUENCE [LARGE SCALE GENOMIC DNA]</scope>
    <source>
        <strain>AX4</strain>
    </source>
</reference>
<reference key="2">
    <citation type="submission" date="2010-01" db="UniProtKB">
        <authorList>
            <person name="Bienvenut W.V."/>
            <person name="Veltman D.M."/>
            <person name="Insall R.H."/>
        </authorList>
    </citation>
    <scope>PROTEIN SEQUENCE OF 134-142 AND 261-269</scope>
    <scope>IDENTIFICATION BY MASS SPECTROMETRY</scope>
</reference>
<reference key="3">
    <citation type="journal article" date="2007" name="Biochimie">
        <title>Mitochondrial carrier family: repertoire and peculiarities of the cellular slime mould Dictyostelium discoideum.</title>
        <authorList>
            <person name="Satre M."/>
            <person name="Mattei S."/>
            <person name="Aubry L."/>
            <person name="Gaudet P."/>
            <person name="Pelosi L."/>
            <person name="Brandolin G."/>
            <person name="Klein G."/>
        </authorList>
    </citation>
    <scope>REVIEW</scope>
</reference>
<proteinExistence type="evidence at protein level"/>
<accession>Q54BF6</accession>
<keyword id="KW-0903">Direct protein sequencing</keyword>
<keyword id="KW-0472">Membrane</keyword>
<keyword id="KW-0496">Mitochondrion</keyword>
<keyword id="KW-0999">Mitochondrion inner membrane</keyword>
<keyword id="KW-1185">Reference proteome</keyword>
<keyword id="KW-0677">Repeat</keyword>
<keyword id="KW-0812">Transmembrane</keyword>
<keyword id="KW-1133">Transmembrane helix</keyword>
<keyword id="KW-0813">Transport</keyword>
<name>MCFN_DICDI</name>
<sequence>MAGDLTPSLFLKYGFGGALSCSITHSLVVPLDVVKTLLQTNPGKYTGMMNGFSTVIKEQGPSGLLQGLGPTAVGYALQGFLKFGFYEVFKKTYADAVGEKADQFRIPIWLAASATAEVIADIALCPNEAVRIRLVAEPTFAKSPVEAFGKIFKQEGVLGFYKGLPPILLKQVPYTMAKFAVFEFTAENVYKGLAASGKPKESLTDGQKLSVSLGSGIVAGIVAAIVSQPADTILSKINQEKTDGGVVKAIGNIMRRLGVRGLFLGLPTRCFMVGTLTAGQFFIYDGIKQMLGLTPAKK</sequence>
<gene>
    <name type="primary">mcfN</name>
    <name type="synonym">slc25a3</name>
    <name type="ORF">DDB_G0293646</name>
</gene>